<comment type="catalytic activity">
    <reaction>
        <text>(S)-4-amino-5-oxopentanoate = 5-aminolevulinate</text>
        <dbReference type="Rhea" id="RHEA:14265"/>
        <dbReference type="ChEBI" id="CHEBI:57501"/>
        <dbReference type="ChEBI" id="CHEBI:356416"/>
        <dbReference type="EC" id="5.4.3.8"/>
    </reaction>
</comment>
<comment type="cofactor">
    <cofactor evidence="1">
        <name>pyridoxal 5'-phosphate</name>
        <dbReference type="ChEBI" id="CHEBI:597326"/>
    </cofactor>
</comment>
<comment type="pathway">
    <text>Porphyrin-containing compound metabolism; protoporphyrin-IX biosynthesis; 5-aminolevulinate from L-glutamyl-tRNA(Glu): step 2/2.</text>
</comment>
<comment type="subcellular location">
    <subcellularLocation>
        <location evidence="2">Cytoplasm</location>
    </subcellularLocation>
</comment>
<comment type="similarity">
    <text evidence="2">Belongs to the class-III pyridoxal-phosphate-dependent aminotransferase family. HemL subfamily.</text>
</comment>
<reference key="1">
    <citation type="journal article" date="2001" name="DNA Res.">
        <title>Complete genome sequence of an aerobic thermoacidophilic Crenarchaeon, Sulfolobus tokodaii strain7.</title>
        <authorList>
            <person name="Kawarabayasi Y."/>
            <person name="Hino Y."/>
            <person name="Horikawa H."/>
            <person name="Jin-no K."/>
            <person name="Takahashi M."/>
            <person name="Sekine M."/>
            <person name="Baba S."/>
            <person name="Ankai A."/>
            <person name="Kosugi H."/>
            <person name="Hosoyama A."/>
            <person name="Fukui S."/>
            <person name="Nagai Y."/>
            <person name="Nishijima K."/>
            <person name="Otsuka R."/>
            <person name="Nakazawa H."/>
            <person name="Takamiya M."/>
            <person name="Kato Y."/>
            <person name="Yoshizawa T."/>
            <person name="Tanaka T."/>
            <person name="Kudoh Y."/>
            <person name="Yamazaki J."/>
            <person name="Kushida N."/>
            <person name="Oguchi A."/>
            <person name="Aoki K."/>
            <person name="Masuda S."/>
            <person name="Yanagii M."/>
            <person name="Nishimura M."/>
            <person name="Yamagishi A."/>
            <person name="Oshima T."/>
            <person name="Kikuchi H."/>
        </authorList>
    </citation>
    <scope>NUCLEOTIDE SEQUENCE [LARGE SCALE GENOMIC DNA]</scope>
    <source>
        <strain>DSM 16993 / JCM 10545 / NBRC 100140 / 7</strain>
    </source>
</reference>
<gene>
    <name type="primary">hemL</name>
    <name type="ordered locus">STK_02150</name>
</gene>
<sequence>MSENLWKKALELFAGGVNSPVRAAVKPYPFYVEKSEGAFLYTIDGQRLIDYVLGYGPLILGHAHPYVKKKIIEQIEKGWLYGTPSKKEIELAEKIRSHIPSAEKIRFVNSGTEATMLAIRLARGYTKREKILKFDGNYHGAHDYALINAGSAVSEFNVIISSGIPTSIINTVIVCKYNDLDCVEKHLRTEEIAGVIVEPVMGNMGVILPEQDFLNGLRELTKTYNSVLIFDEVITGFRLGLSGAQGYFKVIPDLTTLGKIIGGGLPIGAVTGKKEIMSNLTPEGKVFNAGTFNANPLTMAAGIATIEVLETTNAYDIANKASKEIAEELDNSLSKKNFKYTINRIQSMFQFFIGISKVTNADDARLANKDLYVKIHEKLLKLGVFIPPSQFETIFTSSSHSDEIVNLTIEAIHKVVSEI</sequence>
<protein>
    <recommendedName>
        <fullName>Glutamate-1-semialdehyde 2,1-aminomutase</fullName>
        <shortName>GSA</shortName>
        <ecNumber>5.4.3.8</ecNumber>
    </recommendedName>
    <alternativeName>
        <fullName>Glutamate-1-semialdehyde aminotransferase</fullName>
        <shortName>GSA-AT</shortName>
    </alternativeName>
</protein>
<accession>Q976H2</accession>
<accession>F9VMQ2</accession>
<dbReference type="EC" id="5.4.3.8"/>
<dbReference type="EMBL" id="BA000023">
    <property type="protein sequence ID" value="BAK54198.1"/>
    <property type="molecule type" value="Genomic_DNA"/>
</dbReference>
<dbReference type="SMR" id="Q976H2"/>
<dbReference type="STRING" id="273063.STK_02150"/>
<dbReference type="KEGG" id="sto:STK_02150"/>
<dbReference type="PATRIC" id="fig|273063.9.peg.263"/>
<dbReference type="eggNOG" id="arCOG00918">
    <property type="taxonomic scope" value="Archaea"/>
</dbReference>
<dbReference type="UniPathway" id="UPA00251">
    <property type="reaction ID" value="UER00317"/>
</dbReference>
<dbReference type="Proteomes" id="UP000001015">
    <property type="component" value="Chromosome"/>
</dbReference>
<dbReference type="GO" id="GO:0005737">
    <property type="term" value="C:cytoplasm"/>
    <property type="evidence" value="ECO:0007669"/>
    <property type="project" value="UniProtKB-SubCell"/>
</dbReference>
<dbReference type="GO" id="GO:0042286">
    <property type="term" value="F:glutamate-1-semialdehyde 2,1-aminomutase activity"/>
    <property type="evidence" value="ECO:0007669"/>
    <property type="project" value="UniProtKB-UniRule"/>
</dbReference>
<dbReference type="GO" id="GO:0030170">
    <property type="term" value="F:pyridoxal phosphate binding"/>
    <property type="evidence" value="ECO:0007669"/>
    <property type="project" value="InterPro"/>
</dbReference>
<dbReference type="GO" id="GO:0008483">
    <property type="term" value="F:transaminase activity"/>
    <property type="evidence" value="ECO:0007669"/>
    <property type="project" value="InterPro"/>
</dbReference>
<dbReference type="GO" id="GO:0006782">
    <property type="term" value="P:protoporphyrinogen IX biosynthetic process"/>
    <property type="evidence" value="ECO:0007669"/>
    <property type="project" value="UniProtKB-UniRule"/>
</dbReference>
<dbReference type="CDD" id="cd00610">
    <property type="entry name" value="OAT_like"/>
    <property type="match status" value="1"/>
</dbReference>
<dbReference type="FunFam" id="3.40.640.10:FF:000021">
    <property type="entry name" value="Glutamate-1-semialdehyde 2,1-aminomutase"/>
    <property type="match status" value="1"/>
</dbReference>
<dbReference type="Gene3D" id="3.90.1150.10">
    <property type="entry name" value="Aspartate Aminotransferase, domain 1"/>
    <property type="match status" value="1"/>
</dbReference>
<dbReference type="Gene3D" id="3.40.640.10">
    <property type="entry name" value="Type I PLP-dependent aspartate aminotransferase-like (Major domain)"/>
    <property type="match status" value="1"/>
</dbReference>
<dbReference type="HAMAP" id="MF_00375">
    <property type="entry name" value="HemL_aminotrans_3"/>
    <property type="match status" value="1"/>
</dbReference>
<dbReference type="InterPro" id="IPR004639">
    <property type="entry name" value="4pyrrol_synth_GluAld_NH2Trfase"/>
</dbReference>
<dbReference type="InterPro" id="IPR005814">
    <property type="entry name" value="Aminotrans_3"/>
</dbReference>
<dbReference type="InterPro" id="IPR049704">
    <property type="entry name" value="Aminotrans_3_PPA_site"/>
</dbReference>
<dbReference type="InterPro" id="IPR015424">
    <property type="entry name" value="PyrdxlP-dep_Trfase"/>
</dbReference>
<dbReference type="InterPro" id="IPR015421">
    <property type="entry name" value="PyrdxlP-dep_Trfase_major"/>
</dbReference>
<dbReference type="InterPro" id="IPR015422">
    <property type="entry name" value="PyrdxlP-dep_Trfase_small"/>
</dbReference>
<dbReference type="NCBIfam" id="TIGR00713">
    <property type="entry name" value="hemL"/>
    <property type="match status" value="1"/>
</dbReference>
<dbReference type="NCBIfam" id="NF000818">
    <property type="entry name" value="PRK00062.1"/>
    <property type="match status" value="1"/>
</dbReference>
<dbReference type="PANTHER" id="PTHR43713">
    <property type="entry name" value="GLUTAMATE-1-SEMIALDEHYDE 2,1-AMINOMUTASE"/>
    <property type="match status" value="1"/>
</dbReference>
<dbReference type="PANTHER" id="PTHR43713:SF3">
    <property type="entry name" value="GLUTAMATE-1-SEMIALDEHYDE 2,1-AMINOMUTASE 1, CHLOROPLASTIC-RELATED"/>
    <property type="match status" value="1"/>
</dbReference>
<dbReference type="Pfam" id="PF00202">
    <property type="entry name" value="Aminotran_3"/>
    <property type="match status" value="1"/>
</dbReference>
<dbReference type="SUPFAM" id="SSF53383">
    <property type="entry name" value="PLP-dependent transferases"/>
    <property type="match status" value="1"/>
</dbReference>
<dbReference type="PROSITE" id="PS00600">
    <property type="entry name" value="AA_TRANSFER_CLASS_3"/>
    <property type="match status" value="1"/>
</dbReference>
<organism>
    <name type="scientific">Sulfurisphaera tokodaii (strain DSM 16993 / JCM 10545 / NBRC 100140 / 7)</name>
    <name type="common">Sulfolobus tokodaii</name>
    <dbReference type="NCBI Taxonomy" id="273063"/>
    <lineage>
        <taxon>Archaea</taxon>
        <taxon>Thermoproteota</taxon>
        <taxon>Thermoprotei</taxon>
        <taxon>Sulfolobales</taxon>
        <taxon>Sulfolobaceae</taxon>
        <taxon>Sulfurisphaera</taxon>
    </lineage>
</organism>
<proteinExistence type="inferred from homology"/>
<feature type="chain" id="PRO_0000120491" description="Glutamate-1-semialdehyde 2,1-aminomutase">
    <location>
        <begin position="1"/>
        <end position="419"/>
    </location>
</feature>
<feature type="modified residue" description="N6-(pyridoxal phosphate)lysine" evidence="1">
    <location>
        <position position="259"/>
    </location>
</feature>
<evidence type="ECO:0000250" key="1"/>
<evidence type="ECO:0000305" key="2"/>
<name>GSA_SULTO</name>
<keyword id="KW-0963">Cytoplasm</keyword>
<keyword id="KW-0413">Isomerase</keyword>
<keyword id="KW-0627">Porphyrin biosynthesis</keyword>
<keyword id="KW-0663">Pyridoxal phosphate</keyword>
<keyword id="KW-1185">Reference proteome</keyword>